<protein>
    <recommendedName>
        <fullName evidence="1">CTP synthase</fullName>
        <ecNumber evidence="1">6.3.4.2</ecNumber>
    </recommendedName>
    <alternativeName>
        <fullName evidence="1">Cytidine 5'-triphosphate synthase</fullName>
    </alternativeName>
    <alternativeName>
        <fullName evidence="1">Cytidine triphosphate synthetase</fullName>
        <shortName evidence="1">CTP synthetase</shortName>
        <shortName evidence="1">CTPS</shortName>
    </alternativeName>
    <alternativeName>
        <fullName evidence="1">UTP--ammonia ligase</fullName>
    </alternativeName>
</protein>
<proteinExistence type="inferred from homology"/>
<accession>A6U8E2</accession>
<sequence length="542" mass="59873">MARYVFITGGVVSSLGKGIAAAALGALLQARGYRVRLRKLDPYLNVDPGTMSPTQHGEVFVTDDGAETDLDLGHYERFTGRSATKTDNITTGRIYKNIIDKERRGDYLGATVQVIPHVTNEIKNFVTEGNEDYDFVICEIGGTVGDIEAMPFMEAIRQLGNDLPRGTAVYVHLTLMPYIPAAGELKTKPTQHSVKELQALGIHPDILLVRADREIPEAERRKLSLFCNVRQSAVIQALDVASIYDVPIAYHKEGLDNEVLAAFGIEPAPKPRMEAWEDVAHRIRTPEGEVTIAIVGKYTGLKDAYKSLIEALYHGGIANRVKVKLEWIESEVFEKEDPAPYLEKVHGILVPGGFGERGSEGKINAARFARERKVPYFGICFGMQMAVVEAARNLAGIEKASSTEFGPTKEPVVGLMTEWVKGNELEKRSAAGDLGGTMRLGAYRAALKPETKIAGIYGSPDISERHRHRYEVNVDYKDRLESCGLVFSGMSPDGVLPETVEYPDHPWFIGVQYHPELKSRPLDPHPLFASFIEAALEQSRLV</sequence>
<feature type="chain" id="PRO_1000139581" description="CTP synthase">
    <location>
        <begin position="1"/>
        <end position="542"/>
    </location>
</feature>
<feature type="domain" description="Glutamine amidotransferase type-1" evidence="1">
    <location>
        <begin position="291"/>
        <end position="541"/>
    </location>
</feature>
<feature type="region of interest" description="Amidoligase domain" evidence="1">
    <location>
        <begin position="1"/>
        <end position="265"/>
    </location>
</feature>
<feature type="active site" description="Nucleophile; for glutamine hydrolysis" evidence="1">
    <location>
        <position position="380"/>
    </location>
</feature>
<feature type="active site" evidence="1">
    <location>
        <position position="514"/>
    </location>
</feature>
<feature type="active site" evidence="1">
    <location>
        <position position="516"/>
    </location>
</feature>
<feature type="binding site" evidence="1">
    <location>
        <position position="13"/>
    </location>
    <ligand>
        <name>CTP</name>
        <dbReference type="ChEBI" id="CHEBI:37563"/>
        <note>allosteric inhibitor</note>
    </ligand>
</feature>
<feature type="binding site" evidence="1">
    <location>
        <position position="13"/>
    </location>
    <ligand>
        <name>UTP</name>
        <dbReference type="ChEBI" id="CHEBI:46398"/>
    </ligand>
</feature>
<feature type="binding site" evidence="1">
    <location>
        <begin position="14"/>
        <end position="19"/>
    </location>
    <ligand>
        <name>ATP</name>
        <dbReference type="ChEBI" id="CHEBI:30616"/>
    </ligand>
</feature>
<feature type="binding site" evidence="1">
    <location>
        <position position="71"/>
    </location>
    <ligand>
        <name>ATP</name>
        <dbReference type="ChEBI" id="CHEBI:30616"/>
    </ligand>
</feature>
<feature type="binding site" evidence="1">
    <location>
        <position position="71"/>
    </location>
    <ligand>
        <name>Mg(2+)</name>
        <dbReference type="ChEBI" id="CHEBI:18420"/>
    </ligand>
</feature>
<feature type="binding site" evidence="1">
    <location>
        <position position="139"/>
    </location>
    <ligand>
        <name>Mg(2+)</name>
        <dbReference type="ChEBI" id="CHEBI:18420"/>
    </ligand>
</feature>
<feature type="binding site" evidence="1">
    <location>
        <begin position="146"/>
        <end position="148"/>
    </location>
    <ligand>
        <name>CTP</name>
        <dbReference type="ChEBI" id="CHEBI:37563"/>
        <note>allosteric inhibitor</note>
    </ligand>
</feature>
<feature type="binding site" evidence="1">
    <location>
        <begin position="186"/>
        <end position="191"/>
    </location>
    <ligand>
        <name>CTP</name>
        <dbReference type="ChEBI" id="CHEBI:37563"/>
        <note>allosteric inhibitor</note>
    </ligand>
</feature>
<feature type="binding site" evidence="1">
    <location>
        <begin position="186"/>
        <end position="191"/>
    </location>
    <ligand>
        <name>UTP</name>
        <dbReference type="ChEBI" id="CHEBI:46398"/>
    </ligand>
</feature>
<feature type="binding site" evidence="1">
    <location>
        <position position="222"/>
    </location>
    <ligand>
        <name>CTP</name>
        <dbReference type="ChEBI" id="CHEBI:37563"/>
        <note>allosteric inhibitor</note>
    </ligand>
</feature>
<feature type="binding site" evidence="1">
    <location>
        <position position="222"/>
    </location>
    <ligand>
        <name>UTP</name>
        <dbReference type="ChEBI" id="CHEBI:46398"/>
    </ligand>
</feature>
<feature type="binding site" evidence="1">
    <location>
        <position position="353"/>
    </location>
    <ligand>
        <name>L-glutamine</name>
        <dbReference type="ChEBI" id="CHEBI:58359"/>
    </ligand>
</feature>
<feature type="binding site" evidence="1">
    <location>
        <begin position="381"/>
        <end position="384"/>
    </location>
    <ligand>
        <name>L-glutamine</name>
        <dbReference type="ChEBI" id="CHEBI:58359"/>
    </ligand>
</feature>
<feature type="binding site" evidence="1">
    <location>
        <position position="404"/>
    </location>
    <ligand>
        <name>L-glutamine</name>
        <dbReference type="ChEBI" id="CHEBI:58359"/>
    </ligand>
</feature>
<feature type="binding site" evidence="1">
    <location>
        <position position="469"/>
    </location>
    <ligand>
        <name>L-glutamine</name>
        <dbReference type="ChEBI" id="CHEBI:58359"/>
    </ligand>
</feature>
<dbReference type="EC" id="6.3.4.2" evidence="1"/>
<dbReference type="EMBL" id="CP000738">
    <property type="protein sequence ID" value="ABR59922.1"/>
    <property type="molecule type" value="Genomic_DNA"/>
</dbReference>
<dbReference type="RefSeq" id="YP_001326757.1">
    <property type="nucleotide sequence ID" value="NC_009636.1"/>
</dbReference>
<dbReference type="SMR" id="A6U8E2"/>
<dbReference type="STRING" id="366394.Smed_1069"/>
<dbReference type="MEROPS" id="C26.964"/>
<dbReference type="KEGG" id="smd:Smed_1069"/>
<dbReference type="PATRIC" id="fig|366394.8.peg.4192"/>
<dbReference type="eggNOG" id="COG0504">
    <property type="taxonomic scope" value="Bacteria"/>
</dbReference>
<dbReference type="HOGENOM" id="CLU_011675_5_0_5"/>
<dbReference type="OrthoDB" id="9801107at2"/>
<dbReference type="UniPathway" id="UPA00159">
    <property type="reaction ID" value="UER00277"/>
</dbReference>
<dbReference type="Proteomes" id="UP000001108">
    <property type="component" value="Chromosome"/>
</dbReference>
<dbReference type="GO" id="GO:0005829">
    <property type="term" value="C:cytosol"/>
    <property type="evidence" value="ECO:0007669"/>
    <property type="project" value="TreeGrafter"/>
</dbReference>
<dbReference type="GO" id="GO:0005524">
    <property type="term" value="F:ATP binding"/>
    <property type="evidence" value="ECO:0007669"/>
    <property type="project" value="UniProtKB-KW"/>
</dbReference>
<dbReference type="GO" id="GO:0003883">
    <property type="term" value="F:CTP synthase activity"/>
    <property type="evidence" value="ECO:0007669"/>
    <property type="project" value="UniProtKB-UniRule"/>
</dbReference>
<dbReference type="GO" id="GO:0004359">
    <property type="term" value="F:glutaminase activity"/>
    <property type="evidence" value="ECO:0007669"/>
    <property type="project" value="RHEA"/>
</dbReference>
<dbReference type="GO" id="GO:0042802">
    <property type="term" value="F:identical protein binding"/>
    <property type="evidence" value="ECO:0007669"/>
    <property type="project" value="TreeGrafter"/>
</dbReference>
<dbReference type="GO" id="GO:0046872">
    <property type="term" value="F:metal ion binding"/>
    <property type="evidence" value="ECO:0007669"/>
    <property type="project" value="UniProtKB-KW"/>
</dbReference>
<dbReference type="GO" id="GO:0044210">
    <property type="term" value="P:'de novo' CTP biosynthetic process"/>
    <property type="evidence" value="ECO:0007669"/>
    <property type="project" value="UniProtKB-UniRule"/>
</dbReference>
<dbReference type="GO" id="GO:0019856">
    <property type="term" value="P:pyrimidine nucleobase biosynthetic process"/>
    <property type="evidence" value="ECO:0007669"/>
    <property type="project" value="TreeGrafter"/>
</dbReference>
<dbReference type="CDD" id="cd03113">
    <property type="entry name" value="CTPS_N"/>
    <property type="match status" value="1"/>
</dbReference>
<dbReference type="CDD" id="cd01746">
    <property type="entry name" value="GATase1_CTP_Synthase"/>
    <property type="match status" value="1"/>
</dbReference>
<dbReference type="FunFam" id="3.40.50.300:FF:000009">
    <property type="entry name" value="CTP synthase"/>
    <property type="match status" value="1"/>
</dbReference>
<dbReference type="FunFam" id="3.40.50.880:FF:000002">
    <property type="entry name" value="CTP synthase"/>
    <property type="match status" value="1"/>
</dbReference>
<dbReference type="Gene3D" id="3.40.50.880">
    <property type="match status" value="1"/>
</dbReference>
<dbReference type="Gene3D" id="3.40.50.300">
    <property type="entry name" value="P-loop containing nucleotide triphosphate hydrolases"/>
    <property type="match status" value="1"/>
</dbReference>
<dbReference type="HAMAP" id="MF_01227">
    <property type="entry name" value="PyrG"/>
    <property type="match status" value="1"/>
</dbReference>
<dbReference type="InterPro" id="IPR029062">
    <property type="entry name" value="Class_I_gatase-like"/>
</dbReference>
<dbReference type="InterPro" id="IPR004468">
    <property type="entry name" value="CTP_synthase"/>
</dbReference>
<dbReference type="InterPro" id="IPR017456">
    <property type="entry name" value="CTP_synthase_N"/>
</dbReference>
<dbReference type="InterPro" id="IPR017926">
    <property type="entry name" value="GATASE"/>
</dbReference>
<dbReference type="InterPro" id="IPR033828">
    <property type="entry name" value="GATase1_CTP_Synthase"/>
</dbReference>
<dbReference type="InterPro" id="IPR027417">
    <property type="entry name" value="P-loop_NTPase"/>
</dbReference>
<dbReference type="NCBIfam" id="NF003792">
    <property type="entry name" value="PRK05380.1"/>
    <property type="match status" value="1"/>
</dbReference>
<dbReference type="NCBIfam" id="TIGR00337">
    <property type="entry name" value="PyrG"/>
    <property type="match status" value="1"/>
</dbReference>
<dbReference type="PANTHER" id="PTHR11550">
    <property type="entry name" value="CTP SYNTHASE"/>
    <property type="match status" value="1"/>
</dbReference>
<dbReference type="PANTHER" id="PTHR11550:SF0">
    <property type="entry name" value="CTP SYNTHASE-RELATED"/>
    <property type="match status" value="1"/>
</dbReference>
<dbReference type="Pfam" id="PF06418">
    <property type="entry name" value="CTP_synth_N"/>
    <property type="match status" value="1"/>
</dbReference>
<dbReference type="Pfam" id="PF00117">
    <property type="entry name" value="GATase"/>
    <property type="match status" value="1"/>
</dbReference>
<dbReference type="SUPFAM" id="SSF52317">
    <property type="entry name" value="Class I glutamine amidotransferase-like"/>
    <property type="match status" value="1"/>
</dbReference>
<dbReference type="SUPFAM" id="SSF52540">
    <property type="entry name" value="P-loop containing nucleoside triphosphate hydrolases"/>
    <property type="match status" value="1"/>
</dbReference>
<dbReference type="PROSITE" id="PS51273">
    <property type="entry name" value="GATASE_TYPE_1"/>
    <property type="match status" value="1"/>
</dbReference>
<name>PYRG_SINMW</name>
<comment type="function">
    <text evidence="1">Catalyzes the ATP-dependent amination of UTP to CTP with either L-glutamine or ammonia as the source of nitrogen. Regulates intracellular CTP levels through interactions with the four ribonucleotide triphosphates.</text>
</comment>
<comment type="catalytic activity">
    <reaction evidence="1">
        <text>UTP + L-glutamine + ATP + H2O = CTP + L-glutamate + ADP + phosphate + 2 H(+)</text>
        <dbReference type="Rhea" id="RHEA:26426"/>
        <dbReference type="ChEBI" id="CHEBI:15377"/>
        <dbReference type="ChEBI" id="CHEBI:15378"/>
        <dbReference type="ChEBI" id="CHEBI:29985"/>
        <dbReference type="ChEBI" id="CHEBI:30616"/>
        <dbReference type="ChEBI" id="CHEBI:37563"/>
        <dbReference type="ChEBI" id="CHEBI:43474"/>
        <dbReference type="ChEBI" id="CHEBI:46398"/>
        <dbReference type="ChEBI" id="CHEBI:58359"/>
        <dbReference type="ChEBI" id="CHEBI:456216"/>
        <dbReference type="EC" id="6.3.4.2"/>
    </reaction>
</comment>
<comment type="catalytic activity">
    <reaction evidence="1">
        <text>L-glutamine + H2O = L-glutamate + NH4(+)</text>
        <dbReference type="Rhea" id="RHEA:15889"/>
        <dbReference type="ChEBI" id="CHEBI:15377"/>
        <dbReference type="ChEBI" id="CHEBI:28938"/>
        <dbReference type="ChEBI" id="CHEBI:29985"/>
        <dbReference type="ChEBI" id="CHEBI:58359"/>
    </reaction>
</comment>
<comment type="catalytic activity">
    <reaction evidence="1">
        <text>UTP + NH4(+) + ATP = CTP + ADP + phosphate + 2 H(+)</text>
        <dbReference type="Rhea" id="RHEA:16597"/>
        <dbReference type="ChEBI" id="CHEBI:15378"/>
        <dbReference type="ChEBI" id="CHEBI:28938"/>
        <dbReference type="ChEBI" id="CHEBI:30616"/>
        <dbReference type="ChEBI" id="CHEBI:37563"/>
        <dbReference type="ChEBI" id="CHEBI:43474"/>
        <dbReference type="ChEBI" id="CHEBI:46398"/>
        <dbReference type="ChEBI" id="CHEBI:456216"/>
    </reaction>
</comment>
<comment type="activity regulation">
    <text evidence="1">Allosterically activated by GTP, when glutamine is the substrate; GTP has no effect on the reaction when ammonia is the substrate. The allosteric effector GTP functions by stabilizing the protein conformation that binds the tetrahedral intermediate(s) formed during glutamine hydrolysis. Inhibited by the product CTP, via allosteric rather than competitive inhibition.</text>
</comment>
<comment type="pathway">
    <text evidence="1">Pyrimidine metabolism; CTP biosynthesis via de novo pathway; CTP from UDP: step 2/2.</text>
</comment>
<comment type="subunit">
    <text evidence="1">Homotetramer.</text>
</comment>
<comment type="miscellaneous">
    <text evidence="1">CTPSs have evolved a hybrid strategy for distinguishing between UTP and CTP. The overlapping regions of the product feedback inhibitory and substrate sites recognize a common feature in both compounds, the triphosphate moiety. To differentiate isosteric substrate and product pyrimidine rings, an additional pocket far from the expected kinase/ligase catalytic site, specifically recognizes the cytosine and ribose portions of the product inhibitor.</text>
</comment>
<comment type="similarity">
    <text evidence="1">Belongs to the CTP synthase family.</text>
</comment>
<gene>
    <name evidence="1" type="primary">pyrG</name>
    <name type="ordered locus">Smed_1069</name>
</gene>
<keyword id="KW-0067">ATP-binding</keyword>
<keyword id="KW-0315">Glutamine amidotransferase</keyword>
<keyword id="KW-0436">Ligase</keyword>
<keyword id="KW-0460">Magnesium</keyword>
<keyword id="KW-0479">Metal-binding</keyword>
<keyword id="KW-0547">Nucleotide-binding</keyword>
<keyword id="KW-0665">Pyrimidine biosynthesis</keyword>
<organism>
    <name type="scientific">Sinorhizobium medicae (strain WSM419)</name>
    <name type="common">Ensifer medicae</name>
    <dbReference type="NCBI Taxonomy" id="366394"/>
    <lineage>
        <taxon>Bacteria</taxon>
        <taxon>Pseudomonadati</taxon>
        <taxon>Pseudomonadota</taxon>
        <taxon>Alphaproteobacteria</taxon>
        <taxon>Hyphomicrobiales</taxon>
        <taxon>Rhizobiaceae</taxon>
        <taxon>Sinorhizobium/Ensifer group</taxon>
        <taxon>Sinorhizobium</taxon>
    </lineage>
</organism>
<reference key="1">
    <citation type="submission" date="2007-06" db="EMBL/GenBank/DDBJ databases">
        <title>Complete sequence of Sinorhizobium medicae WSM419 chromosome.</title>
        <authorList>
            <consortium name="US DOE Joint Genome Institute"/>
            <person name="Copeland A."/>
            <person name="Lucas S."/>
            <person name="Lapidus A."/>
            <person name="Barry K."/>
            <person name="Glavina del Rio T."/>
            <person name="Dalin E."/>
            <person name="Tice H."/>
            <person name="Pitluck S."/>
            <person name="Chain P."/>
            <person name="Malfatti S."/>
            <person name="Shin M."/>
            <person name="Vergez L."/>
            <person name="Schmutz J."/>
            <person name="Larimer F."/>
            <person name="Land M."/>
            <person name="Hauser L."/>
            <person name="Kyrpides N."/>
            <person name="Mikhailova N."/>
            <person name="Reeve W.G."/>
            <person name="Richardson P."/>
        </authorList>
    </citation>
    <scope>NUCLEOTIDE SEQUENCE [LARGE SCALE GENOMIC DNA]</scope>
    <source>
        <strain>WSM419</strain>
    </source>
</reference>
<evidence type="ECO:0000255" key="1">
    <source>
        <dbReference type="HAMAP-Rule" id="MF_01227"/>
    </source>
</evidence>